<reference key="1">
    <citation type="journal article" date="2002" name="Proc. Natl. Acad. Sci. U.S.A.">
        <title>The genome sequence of the facultative intracellular pathogen Brucella melitensis.</title>
        <authorList>
            <person name="DelVecchio V.G."/>
            <person name="Kapatral V."/>
            <person name="Redkar R.J."/>
            <person name="Patra G."/>
            <person name="Mujer C."/>
            <person name="Los T."/>
            <person name="Ivanova N."/>
            <person name="Anderson I."/>
            <person name="Bhattacharyya A."/>
            <person name="Lykidis A."/>
            <person name="Reznik G."/>
            <person name="Jablonski L."/>
            <person name="Larsen N."/>
            <person name="D'Souza M."/>
            <person name="Bernal A."/>
            <person name="Mazur M."/>
            <person name="Goltsman E."/>
            <person name="Selkov E."/>
            <person name="Elzer P.H."/>
            <person name="Hagius S."/>
            <person name="O'Callaghan D."/>
            <person name="Letesson J.-J."/>
            <person name="Haselkorn R."/>
            <person name="Kyrpides N.C."/>
            <person name="Overbeek R."/>
        </authorList>
    </citation>
    <scope>NUCLEOTIDE SEQUENCE [LARGE SCALE GENOMIC DNA]</scope>
    <source>
        <strain>ATCC 23456 / CCUG 17765 / NCTC 10094 / 16M</strain>
    </source>
</reference>
<accession>P65452</accession>
<accession>Q8YF61</accession>
<protein>
    <recommendedName>
        <fullName evidence="1">UDP-N-acetylglucosamine 1-carboxyvinyltransferase</fullName>
        <ecNumber evidence="1">2.5.1.7</ecNumber>
    </recommendedName>
    <alternativeName>
        <fullName evidence="1">Enoylpyruvate transferase</fullName>
    </alternativeName>
    <alternativeName>
        <fullName evidence="1">UDP-N-acetylglucosamine enolpyruvyl transferase</fullName>
        <shortName evidence="1">EPT</shortName>
    </alternativeName>
</protein>
<name>MURA_BRUME</name>
<evidence type="ECO:0000255" key="1">
    <source>
        <dbReference type="HAMAP-Rule" id="MF_00111"/>
    </source>
</evidence>
<evidence type="ECO:0000305" key="2"/>
<proteinExistence type="inferred from homology"/>
<feature type="chain" id="PRO_0000178851" description="UDP-N-acetylglucosamine 1-carboxyvinyltransferase">
    <location>
        <begin position="1"/>
        <end position="429"/>
    </location>
</feature>
<feature type="active site" description="Proton donor" evidence="1">
    <location>
        <position position="126"/>
    </location>
</feature>
<feature type="binding site" evidence="1">
    <location>
        <begin position="22"/>
        <end position="23"/>
    </location>
    <ligand>
        <name>phosphoenolpyruvate</name>
        <dbReference type="ChEBI" id="CHEBI:58702"/>
    </ligand>
</feature>
<feature type="binding site" evidence="1">
    <location>
        <position position="102"/>
    </location>
    <ligand>
        <name>UDP-N-acetyl-alpha-D-glucosamine</name>
        <dbReference type="ChEBI" id="CHEBI:57705"/>
    </ligand>
</feature>
<feature type="binding site" evidence="1">
    <location>
        <begin position="131"/>
        <end position="135"/>
    </location>
    <ligand>
        <name>UDP-N-acetyl-alpha-D-glucosamine</name>
        <dbReference type="ChEBI" id="CHEBI:57705"/>
    </ligand>
</feature>
<feature type="binding site" evidence="1">
    <location>
        <begin position="171"/>
        <end position="174"/>
    </location>
    <ligand>
        <name>UDP-N-acetyl-alpha-D-glucosamine</name>
        <dbReference type="ChEBI" id="CHEBI:57705"/>
    </ligand>
</feature>
<feature type="binding site" evidence="1">
    <location>
        <position position="316"/>
    </location>
    <ligand>
        <name>UDP-N-acetyl-alpha-D-glucosamine</name>
        <dbReference type="ChEBI" id="CHEBI:57705"/>
    </ligand>
</feature>
<feature type="binding site" evidence="1">
    <location>
        <position position="338"/>
    </location>
    <ligand>
        <name>UDP-N-acetyl-alpha-D-glucosamine</name>
        <dbReference type="ChEBI" id="CHEBI:57705"/>
    </ligand>
</feature>
<feature type="modified residue" description="2-(S-cysteinyl)pyruvic acid O-phosphothioketal" evidence="1">
    <location>
        <position position="126"/>
    </location>
</feature>
<keyword id="KW-0131">Cell cycle</keyword>
<keyword id="KW-0132">Cell division</keyword>
<keyword id="KW-0133">Cell shape</keyword>
<keyword id="KW-0961">Cell wall biogenesis/degradation</keyword>
<keyword id="KW-0963">Cytoplasm</keyword>
<keyword id="KW-0573">Peptidoglycan synthesis</keyword>
<keyword id="KW-0670">Pyruvate</keyword>
<keyword id="KW-0808">Transferase</keyword>
<dbReference type="EC" id="2.5.1.7" evidence="1"/>
<dbReference type="EMBL" id="AE008917">
    <property type="protein sequence ID" value="AAL52847.1"/>
    <property type="status" value="ALT_INIT"/>
    <property type="molecule type" value="Genomic_DNA"/>
</dbReference>
<dbReference type="PIR" id="AD3460">
    <property type="entry name" value="AD3460"/>
</dbReference>
<dbReference type="RefSeq" id="WP_002965536.1">
    <property type="nucleotide sequence ID" value="NZ_GG703778.1"/>
</dbReference>
<dbReference type="SMR" id="P65452"/>
<dbReference type="GeneID" id="97534345"/>
<dbReference type="KEGG" id="bme:BMEI1666"/>
<dbReference type="KEGG" id="bmel:DK63_1824"/>
<dbReference type="PATRIC" id="fig|224914.52.peg.1925"/>
<dbReference type="eggNOG" id="COG0766">
    <property type="taxonomic scope" value="Bacteria"/>
</dbReference>
<dbReference type="UniPathway" id="UPA00219"/>
<dbReference type="Proteomes" id="UP000000419">
    <property type="component" value="Chromosome I"/>
</dbReference>
<dbReference type="GO" id="GO:0005737">
    <property type="term" value="C:cytoplasm"/>
    <property type="evidence" value="ECO:0007669"/>
    <property type="project" value="UniProtKB-SubCell"/>
</dbReference>
<dbReference type="GO" id="GO:0008760">
    <property type="term" value="F:UDP-N-acetylglucosamine 1-carboxyvinyltransferase activity"/>
    <property type="evidence" value="ECO:0007669"/>
    <property type="project" value="UniProtKB-UniRule"/>
</dbReference>
<dbReference type="GO" id="GO:0051301">
    <property type="term" value="P:cell division"/>
    <property type="evidence" value="ECO:0007669"/>
    <property type="project" value="UniProtKB-KW"/>
</dbReference>
<dbReference type="GO" id="GO:0071555">
    <property type="term" value="P:cell wall organization"/>
    <property type="evidence" value="ECO:0007669"/>
    <property type="project" value="UniProtKB-KW"/>
</dbReference>
<dbReference type="GO" id="GO:0009252">
    <property type="term" value="P:peptidoglycan biosynthetic process"/>
    <property type="evidence" value="ECO:0007669"/>
    <property type="project" value="UniProtKB-UniRule"/>
</dbReference>
<dbReference type="GO" id="GO:0008360">
    <property type="term" value="P:regulation of cell shape"/>
    <property type="evidence" value="ECO:0007669"/>
    <property type="project" value="UniProtKB-KW"/>
</dbReference>
<dbReference type="GO" id="GO:0019277">
    <property type="term" value="P:UDP-N-acetylgalactosamine biosynthetic process"/>
    <property type="evidence" value="ECO:0007669"/>
    <property type="project" value="InterPro"/>
</dbReference>
<dbReference type="CDD" id="cd01555">
    <property type="entry name" value="UdpNAET"/>
    <property type="match status" value="1"/>
</dbReference>
<dbReference type="FunFam" id="3.65.10.10:FF:000001">
    <property type="entry name" value="UDP-N-acetylglucosamine 1-carboxyvinyltransferase"/>
    <property type="match status" value="1"/>
</dbReference>
<dbReference type="Gene3D" id="3.65.10.10">
    <property type="entry name" value="Enolpyruvate transferase domain"/>
    <property type="match status" value="2"/>
</dbReference>
<dbReference type="HAMAP" id="MF_00111">
    <property type="entry name" value="MurA"/>
    <property type="match status" value="1"/>
</dbReference>
<dbReference type="InterPro" id="IPR001986">
    <property type="entry name" value="Enolpyruvate_Tfrase_dom"/>
</dbReference>
<dbReference type="InterPro" id="IPR036968">
    <property type="entry name" value="Enolpyruvate_Tfrase_sf"/>
</dbReference>
<dbReference type="InterPro" id="IPR050068">
    <property type="entry name" value="MurA_subfamily"/>
</dbReference>
<dbReference type="InterPro" id="IPR013792">
    <property type="entry name" value="RNA3'P_cycl/enolpyr_Trfase_a/b"/>
</dbReference>
<dbReference type="InterPro" id="IPR005750">
    <property type="entry name" value="UDP_GlcNAc_COvinyl_MurA"/>
</dbReference>
<dbReference type="NCBIfam" id="TIGR01072">
    <property type="entry name" value="murA"/>
    <property type="match status" value="1"/>
</dbReference>
<dbReference type="NCBIfam" id="NF006873">
    <property type="entry name" value="PRK09369.1"/>
    <property type="match status" value="1"/>
</dbReference>
<dbReference type="PANTHER" id="PTHR43783">
    <property type="entry name" value="UDP-N-ACETYLGLUCOSAMINE 1-CARBOXYVINYLTRANSFERASE"/>
    <property type="match status" value="1"/>
</dbReference>
<dbReference type="PANTHER" id="PTHR43783:SF1">
    <property type="entry name" value="UDP-N-ACETYLGLUCOSAMINE 1-CARBOXYVINYLTRANSFERASE"/>
    <property type="match status" value="1"/>
</dbReference>
<dbReference type="Pfam" id="PF00275">
    <property type="entry name" value="EPSP_synthase"/>
    <property type="match status" value="1"/>
</dbReference>
<dbReference type="SUPFAM" id="SSF55205">
    <property type="entry name" value="EPT/RTPC-like"/>
    <property type="match status" value="1"/>
</dbReference>
<sequence length="429" mass="45719">MDRIKIVGGNKLNGVIPISGAKNAALPLMIASLLTDDTLTLENVPHLADVEQLIRILSNHGVDYSVNGRREHQNGPYSRTIHFTARNIVDTTAPYELVSRMRASFWVIGPLLARMGEANVSLPGGCAIGTRPVDLLLDALLALGAEIDIENGYAKAKARNGLVGARYKFPKVSVGATHVMLMAATLAKGETIIENAAREPEVANLADCLNAMGAKISGAGSSTIHVQGVTNLSGARVRIIPDRIEAGTYAMAVAMTGGDVLLEGAQESQLSCVLETLRQAGAEINETNSGLRVVRNGHGIQPVDITTDPFPGFPTDLQAQFMGLMTRAKGTSHITETIFENRFMHVQELARLGAKISLSGQTATVEGVERLKGAQVMATDLRASVSLVIAGLAAEGETIVNRVYHLDRGFERLEEKLSRCGADVKRISG</sequence>
<comment type="function">
    <text evidence="1">Cell wall formation. Adds enolpyruvyl to UDP-N-acetylglucosamine.</text>
</comment>
<comment type="catalytic activity">
    <reaction evidence="1">
        <text>phosphoenolpyruvate + UDP-N-acetyl-alpha-D-glucosamine = UDP-N-acetyl-3-O-(1-carboxyvinyl)-alpha-D-glucosamine + phosphate</text>
        <dbReference type="Rhea" id="RHEA:18681"/>
        <dbReference type="ChEBI" id="CHEBI:43474"/>
        <dbReference type="ChEBI" id="CHEBI:57705"/>
        <dbReference type="ChEBI" id="CHEBI:58702"/>
        <dbReference type="ChEBI" id="CHEBI:68483"/>
        <dbReference type="EC" id="2.5.1.7"/>
    </reaction>
</comment>
<comment type="pathway">
    <text evidence="1">Cell wall biogenesis; peptidoglycan biosynthesis.</text>
</comment>
<comment type="subcellular location">
    <subcellularLocation>
        <location evidence="1">Cytoplasm</location>
    </subcellularLocation>
</comment>
<comment type="similarity">
    <text evidence="1">Belongs to the EPSP synthase family. MurA subfamily.</text>
</comment>
<comment type="sequence caution" evidence="2">
    <conflict type="erroneous initiation">
        <sequence resource="EMBL-CDS" id="AAL52847"/>
    </conflict>
</comment>
<organism>
    <name type="scientific">Brucella melitensis biotype 1 (strain ATCC 23456 / CCUG 17765 / NCTC 10094 / 16M)</name>
    <dbReference type="NCBI Taxonomy" id="224914"/>
    <lineage>
        <taxon>Bacteria</taxon>
        <taxon>Pseudomonadati</taxon>
        <taxon>Pseudomonadota</taxon>
        <taxon>Alphaproteobacteria</taxon>
        <taxon>Hyphomicrobiales</taxon>
        <taxon>Brucellaceae</taxon>
        <taxon>Brucella/Ochrobactrum group</taxon>
        <taxon>Brucella</taxon>
    </lineage>
</organism>
<gene>
    <name evidence="1" type="primary">murA</name>
    <name type="ordered locus">BMEI1666</name>
</gene>